<sequence>MTDGNQKPDGNSGEQVTVTDKRRIDPETGEVRHVPPGDMPGGTAAADAAHTEDKVAELTADLQRVQADFANYRKRALRDQQAAADRAKASVVSQLLGVLDDLERARKHGDLESGPLKSVADKLDSALTGLGLVAFGAEGEDFDPVLHEAVQHEGDGGQGSKPVIGTVMRQGYQLGEQVLRHALVGVVDTVVVDAAELESVDDGTAVADTAENDQADQGNSADTLGEQAESEPSGS</sequence>
<reference key="1">
    <citation type="journal article" date="2007" name="Proc. Natl. Acad. Sci. U.S.A.">
        <title>Genome plasticity of BCG and impact on vaccine efficacy.</title>
        <authorList>
            <person name="Brosch R."/>
            <person name="Gordon S.V."/>
            <person name="Garnier T."/>
            <person name="Eiglmeier K."/>
            <person name="Frigui W."/>
            <person name="Valenti P."/>
            <person name="Dos Santos S."/>
            <person name="Duthoy S."/>
            <person name="Lacroix C."/>
            <person name="Garcia-Pelayo C."/>
            <person name="Inwald J.K."/>
            <person name="Golby P."/>
            <person name="Garcia J.N."/>
            <person name="Hewinson R.G."/>
            <person name="Behr M.A."/>
            <person name="Quail M.A."/>
            <person name="Churcher C."/>
            <person name="Barrell B.G."/>
            <person name="Parkhill J."/>
            <person name="Cole S.T."/>
        </authorList>
    </citation>
    <scope>NUCLEOTIDE SEQUENCE [LARGE SCALE GENOMIC DNA]</scope>
    <source>
        <strain>BCG / Pasteur 1173P2</strain>
    </source>
</reference>
<evidence type="ECO:0000255" key="1">
    <source>
        <dbReference type="HAMAP-Rule" id="MF_01151"/>
    </source>
</evidence>
<evidence type="ECO:0000256" key="2">
    <source>
        <dbReference type="SAM" id="MobiDB-lite"/>
    </source>
</evidence>
<accession>A1KFH3</accession>
<protein>
    <recommendedName>
        <fullName evidence="1">Protein GrpE</fullName>
    </recommendedName>
    <alternativeName>
        <fullName evidence="1">HSP-70 cofactor</fullName>
    </alternativeName>
</protein>
<name>GRPE_MYCBP</name>
<proteinExistence type="inferred from homology"/>
<comment type="function">
    <text evidence="1">Participates actively in the response to hyperosmotic and heat shock by preventing the aggregation of stress-denatured proteins, in association with DnaK and GrpE. It is the nucleotide exchange factor for DnaK and may function as a thermosensor. Unfolded proteins bind initially to DnaJ; upon interaction with the DnaJ-bound protein, DnaK hydrolyzes its bound ATP, resulting in the formation of a stable complex. GrpE releases ADP from DnaK; ATP binding to DnaK triggers the release of the substrate protein, thus completing the reaction cycle. Several rounds of ATP-dependent interactions between DnaJ, DnaK and GrpE are required for fully efficient folding.</text>
</comment>
<comment type="subunit">
    <text evidence="1">Homodimer.</text>
</comment>
<comment type="subcellular location">
    <subcellularLocation>
        <location evidence="1">Cytoplasm</location>
    </subcellularLocation>
</comment>
<comment type="similarity">
    <text evidence="1">Belongs to the GrpE family.</text>
</comment>
<dbReference type="EMBL" id="AM408590">
    <property type="protein sequence ID" value="CAL70375.1"/>
    <property type="molecule type" value="Genomic_DNA"/>
</dbReference>
<dbReference type="RefSeq" id="WP_010950385.1">
    <property type="nucleotide sequence ID" value="NC_008769.1"/>
</dbReference>
<dbReference type="SMR" id="A1KFH3"/>
<dbReference type="KEGG" id="mbb:BCG_0390"/>
<dbReference type="HOGENOM" id="CLU_057217_4_1_11"/>
<dbReference type="Proteomes" id="UP000001472">
    <property type="component" value="Chromosome"/>
</dbReference>
<dbReference type="GO" id="GO:0005737">
    <property type="term" value="C:cytoplasm"/>
    <property type="evidence" value="ECO:0007669"/>
    <property type="project" value="UniProtKB-SubCell"/>
</dbReference>
<dbReference type="GO" id="GO:0000774">
    <property type="term" value="F:adenyl-nucleotide exchange factor activity"/>
    <property type="evidence" value="ECO:0007669"/>
    <property type="project" value="InterPro"/>
</dbReference>
<dbReference type="GO" id="GO:0042803">
    <property type="term" value="F:protein homodimerization activity"/>
    <property type="evidence" value="ECO:0007669"/>
    <property type="project" value="InterPro"/>
</dbReference>
<dbReference type="GO" id="GO:0051087">
    <property type="term" value="F:protein-folding chaperone binding"/>
    <property type="evidence" value="ECO:0007669"/>
    <property type="project" value="InterPro"/>
</dbReference>
<dbReference type="GO" id="GO:0051082">
    <property type="term" value="F:unfolded protein binding"/>
    <property type="evidence" value="ECO:0007669"/>
    <property type="project" value="TreeGrafter"/>
</dbReference>
<dbReference type="GO" id="GO:0006457">
    <property type="term" value="P:protein folding"/>
    <property type="evidence" value="ECO:0007669"/>
    <property type="project" value="InterPro"/>
</dbReference>
<dbReference type="CDD" id="cd00446">
    <property type="entry name" value="GrpE"/>
    <property type="match status" value="1"/>
</dbReference>
<dbReference type="FunFam" id="2.30.22.10:FF:000007">
    <property type="entry name" value="Protein GrpE"/>
    <property type="match status" value="1"/>
</dbReference>
<dbReference type="FunFam" id="3.90.20.20:FF:000010">
    <property type="entry name" value="Protein GrpE"/>
    <property type="match status" value="1"/>
</dbReference>
<dbReference type="Gene3D" id="3.90.20.20">
    <property type="match status" value="1"/>
</dbReference>
<dbReference type="Gene3D" id="2.30.22.10">
    <property type="entry name" value="Head domain of nucleotide exchange factor GrpE"/>
    <property type="match status" value="1"/>
</dbReference>
<dbReference type="HAMAP" id="MF_01151">
    <property type="entry name" value="GrpE"/>
    <property type="match status" value="1"/>
</dbReference>
<dbReference type="InterPro" id="IPR000740">
    <property type="entry name" value="GrpE"/>
</dbReference>
<dbReference type="InterPro" id="IPR013805">
    <property type="entry name" value="GrpE_coiled_coil"/>
</dbReference>
<dbReference type="InterPro" id="IPR009012">
    <property type="entry name" value="GrpE_head"/>
</dbReference>
<dbReference type="NCBIfam" id="NF010740">
    <property type="entry name" value="PRK14142.1"/>
    <property type="match status" value="1"/>
</dbReference>
<dbReference type="NCBIfam" id="NF010761">
    <property type="entry name" value="PRK14164.1"/>
    <property type="match status" value="1"/>
</dbReference>
<dbReference type="PANTHER" id="PTHR21237">
    <property type="entry name" value="GRPE PROTEIN"/>
    <property type="match status" value="1"/>
</dbReference>
<dbReference type="PANTHER" id="PTHR21237:SF23">
    <property type="entry name" value="GRPE PROTEIN HOMOLOG, MITOCHONDRIAL"/>
    <property type="match status" value="1"/>
</dbReference>
<dbReference type="Pfam" id="PF01025">
    <property type="entry name" value="GrpE"/>
    <property type="match status" value="1"/>
</dbReference>
<dbReference type="PRINTS" id="PR00773">
    <property type="entry name" value="GRPEPROTEIN"/>
</dbReference>
<dbReference type="SUPFAM" id="SSF58014">
    <property type="entry name" value="Coiled-coil domain of nucleotide exchange factor GrpE"/>
    <property type="match status" value="1"/>
</dbReference>
<dbReference type="SUPFAM" id="SSF51064">
    <property type="entry name" value="Head domain of nucleotide exchange factor GrpE"/>
    <property type="match status" value="1"/>
</dbReference>
<dbReference type="PROSITE" id="PS01071">
    <property type="entry name" value="GRPE"/>
    <property type="match status" value="1"/>
</dbReference>
<organism>
    <name type="scientific">Mycobacterium bovis (strain BCG / Pasteur 1173P2)</name>
    <dbReference type="NCBI Taxonomy" id="410289"/>
    <lineage>
        <taxon>Bacteria</taxon>
        <taxon>Bacillati</taxon>
        <taxon>Actinomycetota</taxon>
        <taxon>Actinomycetes</taxon>
        <taxon>Mycobacteriales</taxon>
        <taxon>Mycobacteriaceae</taxon>
        <taxon>Mycobacterium</taxon>
        <taxon>Mycobacterium tuberculosis complex</taxon>
    </lineage>
</organism>
<keyword id="KW-0143">Chaperone</keyword>
<keyword id="KW-0963">Cytoplasm</keyword>
<keyword id="KW-0346">Stress response</keyword>
<feature type="chain" id="PRO_1000164204" description="Protein GrpE">
    <location>
        <begin position="1"/>
        <end position="235"/>
    </location>
</feature>
<feature type="region of interest" description="Disordered" evidence="2">
    <location>
        <begin position="1"/>
        <end position="50"/>
    </location>
</feature>
<feature type="region of interest" description="Disordered" evidence="2">
    <location>
        <begin position="198"/>
        <end position="235"/>
    </location>
</feature>
<feature type="compositionally biased region" description="Polar residues" evidence="2">
    <location>
        <begin position="1"/>
        <end position="18"/>
    </location>
</feature>
<feature type="compositionally biased region" description="Basic and acidic residues" evidence="2">
    <location>
        <begin position="19"/>
        <end position="35"/>
    </location>
</feature>
<gene>
    <name evidence="1" type="primary">grpE</name>
    <name type="ordered locus">BCG_0390</name>
</gene>